<keyword id="KW-0106">Calcium</keyword>
<keyword id="KW-0378">Hydrolase</keyword>
<keyword id="KW-0479">Metal-binding</keyword>
<keyword id="KW-0482">Metalloprotease</keyword>
<keyword id="KW-0645">Protease</keyword>
<keyword id="KW-0677">Repeat</keyword>
<keyword id="KW-0964">Secreted</keyword>
<keyword id="KW-0843">Virulence</keyword>
<keyword id="KW-0862">Zinc</keyword>
<keyword id="KW-0865">Zymogen</keyword>
<proteinExistence type="inferred from homology"/>
<dbReference type="EC" id="3.4.24.40"/>
<dbReference type="EMBL" id="U25950">
    <property type="protein sequence ID" value="AAA86729.1"/>
    <property type="status" value="ALT_INIT"/>
    <property type="molecule type" value="Genomic_DNA"/>
</dbReference>
<dbReference type="RefSeq" id="WP_004247335.1">
    <property type="nucleotide sequence ID" value="NZ_WEKJ01000009.1"/>
</dbReference>
<dbReference type="SMR" id="Q11137"/>
<dbReference type="STRING" id="584.AOUC001_14810"/>
<dbReference type="MEROPS" id="M10.057"/>
<dbReference type="PATRIC" id="fig|584.120.peg.2878"/>
<dbReference type="OrthoDB" id="733404at2"/>
<dbReference type="GO" id="GO:0031012">
    <property type="term" value="C:extracellular matrix"/>
    <property type="evidence" value="ECO:0007669"/>
    <property type="project" value="InterPro"/>
</dbReference>
<dbReference type="GO" id="GO:0005615">
    <property type="term" value="C:extracellular space"/>
    <property type="evidence" value="ECO:0007669"/>
    <property type="project" value="InterPro"/>
</dbReference>
<dbReference type="GO" id="GO:0005509">
    <property type="term" value="F:calcium ion binding"/>
    <property type="evidence" value="ECO:0007669"/>
    <property type="project" value="InterPro"/>
</dbReference>
<dbReference type="GO" id="GO:0004222">
    <property type="term" value="F:metalloendopeptidase activity"/>
    <property type="evidence" value="ECO:0007669"/>
    <property type="project" value="InterPro"/>
</dbReference>
<dbReference type="GO" id="GO:0008270">
    <property type="term" value="F:zinc ion binding"/>
    <property type="evidence" value="ECO:0007669"/>
    <property type="project" value="InterPro"/>
</dbReference>
<dbReference type="GO" id="GO:0006508">
    <property type="term" value="P:proteolysis"/>
    <property type="evidence" value="ECO:0007669"/>
    <property type="project" value="UniProtKB-KW"/>
</dbReference>
<dbReference type="CDD" id="cd04277">
    <property type="entry name" value="ZnMc_serralysin_like"/>
    <property type="match status" value="1"/>
</dbReference>
<dbReference type="Gene3D" id="3.40.390.10">
    <property type="entry name" value="Collagenase (Catalytic Domain)"/>
    <property type="match status" value="1"/>
</dbReference>
<dbReference type="Gene3D" id="2.150.10.10">
    <property type="entry name" value="Serralysin-like metalloprotease, C-terminal"/>
    <property type="match status" value="1"/>
</dbReference>
<dbReference type="InterPro" id="IPR001343">
    <property type="entry name" value="Hemolysn_Ca-bd"/>
</dbReference>
<dbReference type="InterPro" id="IPR024079">
    <property type="entry name" value="MetalloPept_cat_dom_sf"/>
</dbReference>
<dbReference type="InterPro" id="IPR001818">
    <property type="entry name" value="Pept_M10_metallopeptidase"/>
</dbReference>
<dbReference type="InterPro" id="IPR016294">
    <property type="entry name" value="Pept_M10B"/>
</dbReference>
<dbReference type="InterPro" id="IPR013858">
    <property type="entry name" value="Peptidase_M10B_C"/>
</dbReference>
<dbReference type="InterPro" id="IPR006026">
    <property type="entry name" value="Peptidase_Metallo"/>
</dbReference>
<dbReference type="InterPro" id="IPR050557">
    <property type="entry name" value="RTX_toxin/Mannuronan_C5-epim"/>
</dbReference>
<dbReference type="InterPro" id="IPR034033">
    <property type="entry name" value="Serralysin-like"/>
</dbReference>
<dbReference type="InterPro" id="IPR011049">
    <property type="entry name" value="Serralysin-like_metalloprot_C"/>
</dbReference>
<dbReference type="InterPro" id="IPR019960">
    <property type="entry name" value="T1SS_VCA0849"/>
</dbReference>
<dbReference type="NCBIfam" id="TIGR03661">
    <property type="entry name" value="T1SS_VCA0849"/>
    <property type="match status" value="1"/>
</dbReference>
<dbReference type="NCBIfam" id="NF035945">
    <property type="entry name" value="Zn_serralysin"/>
    <property type="match status" value="1"/>
</dbReference>
<dbReference type="PANTHER" id="PTHR38340">
    <property type="entry name" value="S-LAYER PROTEIN"/>
    <property type="match status" value="1"/>
</dbReference>
<dbReference type="PANTHER" id="PTHR38340:SF1">
    <property type="entry name" value="S-LAYER PROTEIN"/>
    <property type="match status" value="1"/>
</dbReference>
<dbReference type="Pfam" id="PF00353">
    <property type="entry name" value="HemolysinCabind"/>
    <property type="match status" value="1"/>
</dbReference>
<dbReference type="Pfam" id="PF00413">
    <property type="entry name" value="Peptidase_M10"/>
    <property type="match status" value="1"/>
</dbReference>
<dbReference type="Pfam" id="PF08548">
    <property type="entry name" value="Peptidase_M10_C"/>
    <property type="match status" value="1"/>
</dbReference>
<dbReference type="PIRSF" id="PIRSF001205">
    <property type="entry name" value="Peptidase_M10B"/>
    <property type="match status" value="1"/>
</dbReference>
<dbReference type="PRINTS" id="PR00313">
    <property type="entry name" value="CABNDNGRPT"/>
</dbReference>
<dbReference type="SMART" id="SM00235">
    <property type="entry name" value="ZnMc"/>
    <property type="match status" value="1"/>
</dbReference>
<dbReference type="SUPFAM" id="SSF51120">
    <property type="entry name" value="beta-Roll"/>
    <property type="match status" value="1"/>
</dbReference>
<dbReference type="SUPFAM" id="SSF55486">
    <property type="entry name" value="Metalloproteases ('zincins'), catalytic domain"/>
    <property type="match status" value="1"/>
</dbReference>
<dbReference type="PROSITE" id="PS00142">
    <property type="entry name" value="ZINC_PROTEASE"/>
    <property type="match status" value="1"/>
</dbReference>
<comment type="function">
    <text>One of the virulence factors produced during swarmer cell differentiation of the bacteria, which seems to be associated with pathogenesis. The protease activity is limited to IgA1, IgA2, as well as IgG degradation.</text>
</comment>
<comment type="catalytic activity">
    <reaction>
        <text>Preferential cleavage of bonds with hydrophobic residues in P1'.</text>
        <dbReference type="EC" id="3.4.24.40"/>
    </reaction>
</comment>
<comment type="cofactor">
    <cofactor evidence="1">
        <name>Ca(2+)</name>
        <dbReference type="ChEBI" id="CHEBI:29108"/>
    </cofactor>
    <text evidence="1">Binds 7 Ca(2+) ions per subunit.</text>
</comment>
<comment type="cofactor">
    <cofactor evidence="1">
        <name>Zn(2+)</name>
        <dbReference type="ChEBI" id="CHEBI:29105"/>
    </cofactor>
    <text evidence="1">Binds 1 zinc ion per subunit.</text>
</comment>
<comment type="activity regulation">
    <text>Ca(2+) increases protease activity.</text>
</comment>
<comment type="subcellular location">
    <subcellularLocation>
        <location>Secreted</location>
    </subcellularLocation>
</comment>
<comment type="miscellaneous">
    <text>The Gly-rich repeats may be important in the extracellular secretion of this metalloprotease.</text>
</comment>
<comment type="similarity">
    <text evidence="4">Belongs to the peptidase M10B family.</text>
</comment>
<comment type="sequence caution" evidence="4">
    <conflict type="erroneous initiation">
        <sequence resource="EMBL-CDS" id="AAA86729"/>
    </conflict>
</comment>
<accession>Q11137</accession>
<feature type="propeptide" id="PRO_0000028697" evidence="2">
    <location>
        <begin position="1"/>
        <end position="16"/>
    </location>
</feature>
<feature type="chain" id="PRO_0000028698" description="Serralysin">
    <location>
        <begin position="17"/>
        <end position="491"/>
    </location>
</feature>
<feature type="repeat" description="Hemolysin-type calcium-binding 1">
    <location>
        <begin position="342"/>
        <end position="359"/>
    </location>
</feature>
<feature type="repeat" description="Hemolysin-type calcium-binding 2">
    <location>
        <begin position="360"/>
        <end position="377"/>
    </location>
</feature>
<feature type="repeat" description="Hemolysin-type calcium-binding 3">
    <location>
        <begin position="378"/>
        <end position="395"/>
    </location>
</feature>
<feature type="active site" evidence="3">
    <location>
        <position position="187"/>
    </location>
</feature>
<feature type="binding site" evidence="3">
    <location>
        <position position="186"/>
    </location>
    <ligand>
        <name>Zn(2+)</name>
        <dbReference type="ChEBI" id="CHEBI:29105"/>
        <note>catalytic</note>
    </ligand>
</feature>
<feature type="binding site" evidence="3">
    <location>
        <position position="190"/>
    </location>
    <ligand>
        <name>Zn(2+)</name>
        <dbReference type="ChEBI" id="CHEBI:29105"/>
        <note>catalytic</note>
    </ligand>
</feature>
<feature type="binding site" evidence="3">
    <location>
        <position position="196"/>
    </location>
    <ligand>
        <name>Zn(2+)</name>
        <dbReference type="ChEBI" id="CHEBI:29105"/>
        <note>catalytic</note>
    </ligand>
</feature>
<feature type="binding site" evidence="3">
    <location>
        <position position="226"/>
    </location>
    <ligand>
        <name>Zn(2+)</name>
        <dbReference type="ChEBI" id="CHEBI:29105"/>
        <note>catalytic</note>
    </ligand>
</feature>
<feature type="binding site" evidence="1">
    <location>
        <position position="263"/>
    </location>
    <ligand>
        <name>Ca(2+)</name>
        <dbReference type="ChEBI" id="CHEBI:29108"/>
        <label>1</label>
    </ligand>
</feature>
<feature type="binding site" evidence="1">
    <location>
        <position position="265"/>
    </location>
    <ligand>
        <name>Ca(2+)</name>
        <dbReference type="ChEBI" id="CHEBI:29108"/>
        <label>1</label>
    </ligand>
</feature>
<feature type="binding site" evidence="1">
    <location>
        <position position="295"/>
    </location>
    <ligand>
        <name>Ca(2+)</name>
        <dbReference type="ChEBI" id="CHEBI:29108"/>
        <label>1</label>
    </ligand>
</feature>
<feature type="binding site" evidence="1">
    <location>
        <position position="297"/>
    </location>
    <ligand>
        <name>Ca(2+)</name>
        <dbReference type="ChEBI" id="CHEBI:29108"/>
        <label>1</label>
    </ligand>
</feature>
<feature type="binding site" evidence="1">
    <location>
        <position position="298"/>
    </location>
    <ligand>
        <name>Ca(2+)</name>
        <dbReference type="ChEBI" id="CHEBI:29108"/>
        <label>2</label>
    </ligand>
</feature>
<feature type="binding site" evidence="1">
    <location>
        <position position="300"/>
    </location>
    <ligand>
        <name>Ca(2+)</name>
        <dbReference type="ChEBI" id="CHEBI:29108"/>
        <label>1</label>
    </ligand>
</feature>
<feature type="binding site" evidence="1">
    <location>
        <position position="300"/>
    </location>
    <ligand>
        <name>Ca(2+)</name>
        <dbReference type="ChEBI" id="CHEBI:29108"/>
        <label>2</label>
    </ligand>
</feature>
<feature type="binding site" evidence="1">
    <location>
        <position position="337"/>
    </location>
    <ligand>
        <name>Ca(2+)</name>
        <dbReference type="ChEBI" id="CHEBI:29108"/>
        <label>2</label>
    </ligand>
</feature>
<feature type="binding site" evidence="1">
    <location>
        <position position="339"/>
    </location>
    <ligand>
        <name>Ca(2+)</name>
        <dbReference type="ChEBI" id="CHEBI:29108"/>
        <label>2</label>
    </ligand>
</feature>
<feature type="binding site" evidence="1">
    <location>
        <position position="344"/>
    </location>
    <ligand>
        <name>Ca(2+)</name>
        <dbReference type="ChEBI" id="CHEBI:29108"/>
        <label>3</label>
    </ligand>
</feature>
<feature type="binding site" evidence="1">
    <location>
        <position position="346"/>
    </location>
    <ligand>
        <name>Ca(2+)</name>
        <dbReference type="ChEBI" id="CHEBI:29108"/>
        <label>3</label>
    </ligand>
</feature>
<feature type="binding site" evidence="1">
    <location>
        <position position="348"/>
    </location>
    <ligand>
        <name>Ca(2+)</name>
        <dbReference type="ChEBI" id="CHEBI:29108"/>
        <label>3</label>
    </ligand>
</feature>
<feature type="binding site" evidence="1">
    <location>
        <position position="353"/>
    </location>
    <ligand>
        <name>Ca(2+)</name>
        <dbReference type="ChEBI" id="CHEBI:29108"/>
        <label>4</label>
    </ligand>
</feature>
<feature type="binding site" evidence="1">
    <location>
        <position position="355"/>
    </location>
    <ligand>
        <name>Ca(2+)</name>
        <dbReference type="ChEBI" id="CHEBI:29108"/>
        <label>4</label>
    </ligand>
</feature>
<feature type="binding site" evidence="1">
    <location>
        <position position="357"/>
    </location>
    <ligand>
        <name>Ca(2+)</name>
        <dbReference type="ChEBI" id="CHEBI:29108"/>
        <label>4</label>
    </ligand>
</feature>
<feature type="binding site" evidence="1">
    <location>
        <position position="361"/>
    </location>
    <ligand>
        <name>Ca(2+)</name>
        <dbReference type="ChEBI" id="CHEBI:29108"/>
        <label>3</label>
    </ligand>
</feature>
<feature type="binding site" evidence="1">
    <location>
        <position position="362"/>
    </location>
    <ligand>
        <name>Ca(2+)</name>
        <dbReference type="ChEBI" id="CHEBI:29108"/>
        <label>5</label>
    </ligand>
</feature>
<feature type="binding site" evidence="1">
    <location>
        <position position="364"/>
    </location>
    <ligand>
        <name>Ca(2+)</name>
        <dbReference type="ChEBI" id="CHEBI:29108"/>
        <label>5</label>
    </ligand>
</feature>
<feature type="binding site" evidence="1">
    <location>
        <position position="366"/>
    </location>
    <ligand>
        <name>Ca(2+)</name>
        <dbReference type="ChEBI" id="CHEBI:29108"/>
        <label>3</label>
    </ligand>
</feature>
<feature type="binding site" evidence="1">
    <location>
        <position position="366"/>
    </location>
    <ligand>
        <name>Ca(2+)</name>
        <dbReference type="ChEBI" id="CHEBI:29108"/>
        <label>5</label>
    </ligand>
</feature>
<feature type="binding site" evidence="1">
    <location>
        <position position="370"/>
    </location>
    <ligand>
        <name>Ca(2+)</name>
        <dbReference type="ChEBI" id="CHEBI:29108"/>
        <label>4</label>
    </ligand>
</feature>
<feature type="binding site" evidence="1">
    <location>
        <position position="373"/>
    </location>
    <ligand>
        <name>Ca(2+)</name>
        <dbReference type="ChEBI" id="CHEBI:29108"/>
        <label>6</label>
    </ligand>
</feature>
<feature type="binding site" evidence="1">
    <location>
        <position position="384"/>
    </location>
    <ligand>
        <name>Ca(2+)</name>
        <dbReference type="ChEBI" id="CHEBI:29108"/>
        <label>4</label>
    </ligand>
</feature>
<feature type="binding site" evidence="1">
    <location>
        <position position="384"/>
    </location>
    <ligand>
        <name>Ca(2+)</name>
        <dbReference type="ChEBI" id="CHEBI:29108"/>
        <label>6</label>
    </ligand>
</feature>
<feature type="binding site" evidence="1">
    <location>
        <position position="388"/>
    </location>
    <ligand>
        <name>Ca(2+)</name>
        <dbReference type="ChEBI" id="CHEBI:29108"/>
        <label>5</label>
    </ligand>
</feature>
<feature type="binding site" evidence="1">
    <location>
        <position position="389"/>
    </location>
    <ligand>
        <name>Ca(2+)</name>
        <dbReference type="ChEBI" id="CHEBI:29108"/>
        <label>7</label>
    </ligand>
</feature>
<feature type="binding site" evidence="1">
    <location>
        <position position="391"/>
    </location>
    <ligand>
        <name>Ca(2+)</name>
        <dbReference type="ChEBI" id="CHEBI:29108"/>
        <label>7</label>
    </ligand>
</feature>
<feature type="binding site" evidence="1">
    <location>
        <position position="402"/>
    </location>
    <ligand>
        <name>Ca(2+)</name>
        <dbReference type="ChEBI" id="CHEBI:29108"/>
        <label>6</label>
    </ligand>
</feature>
<feature type="binding site" evidence="1">
    <location>
        <position position="409"/>
    </location>
    <ligand>
        <name>Ca(2+)</name>
        <dbReference type="ChEBI" id="CHEBI:29108"/>
        <label>6</label>
    </ligand>
</feature>
<feature type="binding site" evidence="1">
    <location>
        <position position="419"/>
    </location>
    <ligand>
        <name>Ca(2+)</name>
        <dbReference type="ChEBI" id="CHEBI:29108"/>
        <label>7</label>
    </ligand>
</feature>
<name>ZAPA_PROMI</name>
<evidence type="ECO:0000250" key="1"/>
<evidence type="ECO:0000255" key="2"/>
<evidence type="ECO:0000255" key="3">
    <source>
        <dbReference type="PROSITE-ProRule" id="PRU10095"/>
    </source>
</evidence>
<evidence type="ECO:0000305" key="4"/>
<reference key="1">
    <citation type="journal article" date="1995" name="J. Bacteriol.">
        <title>Molecular analysis of a metalloprotease from Proteus mirabilis.</title>
        <authorList>
            <person name="Wassif C."/>
            <person name="Cheek D."/>
            <person name="Belas R."/>
        </authorList>
    </citation>
    <scope>NUCLEOTIDE SEQUENCE [GENOMIC DNA]</scope>
    <source>
        <strain>BB2000</strain>
    </source>
</reference>
<protein>
    <recommendedName>
        <fullName>Serralysin</fullName>
        <ecNumber>3.4.24.40</ecNumber>
    </recommendedName>
    <alternativeName>
        <fullName>Extracellular metalloprotease</fullName>
    </alternativeName>
</protein>
<organism>
    <name type="scientific">Proteus mirabilis</name>
    <dbReference type="NCBI Taxonomy" id="584"/>
    <lineage>
        <taxon>Bacteria</taxon>
        <taxon>Pseudomonadati</taxon>
        <taxon>Pseudomonadota</taxon>
        <taxon>Gammaproteobacteria</taxon>
        <taxon>Enterobacterales</taxon>
        <taxon>Morganellaceae</taxon>
        <taxon>Proteus</taxon>
    </lineage>
</organism>
<sequence length="491" mass="54000">MGSFLLKKAVGLSNISDLLDKSGIFYNYSTKVLPSFDYDTAGKHIAREDSTWNGKYVIGQPAEVTYSFPKWEGKFNQFGNKNPYEFNELQKEHARKSLDAWSDIANIKFTEVAVGNVDGMKASDVKTDITFGNIYDPNGTFQAYATLPNTYAYGKDLSGQAWFSDYHYAGNTTPELGNYGRLTIIHEIGHTLGLMHPGDYNAGQNVPGYLKSDYAEDSRQYTVMSYWDEYETGAHFQGAYAGAPLLHDISAMQYLYGANTTTRTGDDVYGFNSNTGIDYYTATDSNDKLIFSVWDSGGNDTFDFSGFYQDQLIDLRAGNFSDVGGLQKNVSIAQNVTIENAIGGFGNDIIHGNDADNTLIGGEGDDIIYGHSGNNTIYGGRGQDTLHGGTGSNTFIYKEIADSLVTAADKIMDFKTGIDKIDLSTLIQDTFSSKILNFVDNFTGNAGEATLSYNEVTNASELAINAYGYNYNPDFKIDIVGFVNYETDFIV</sequence>
<gene>
    <name type="primary">zapA</name>
</gene>